<organismHost>
    <name type="scientific">Bos taurus</name>
    <name type="common">Bovine</name>
    <dbReference type="NCBI Taxonomy" id="9913"/>
</organismHost>
<proteinExistence type="predicted"/>
<protein>
    <recommendedName>
        <fullName>Uncharacterized 7.0 kDa protein</fullName>
    </recommendedName>
</protein>
<organism>
    <name type="scientific">Vaccinia virus (strain Western Reserve)</name>
    <name type="common">VACV</name>
    <name type="synonym">Vaccinia virus (strain WR)</name>
    <dbReference type="NCBI Taxonomy" id="10254"/>
    <lineage>
        <taxon>Viruses</taxon>
        <taxon>Varidnaviria</taxon>
        <taxon>Bamfordvirae</taxon>
        <taxon>Nucleocytoviricota</taxon>
        <taxon>Pokkesviricetes</taxon>
        <taxon>Chitovirales</taxon>
        <taxon>Poxviridae</taxon>
        <taxon>Chordopoxvirinae</taxon>
        <taxon>Orthopoxvirus</taxon>
        <taxon>Vaccinia virus</taxon>
    </lineage>
</organism>
<name>YVD1_VACCW</name>
<accession>P68488</accession>
<accession>P04319</accession>
<sequence>MALSFNQLSLTHFSSLTFLKRLQYILIVSITPLPNKVGSLIIQYFSFTKSNNGRNTSKVNIL</sequence>
<dbReference type="EMBL" id="M15058">
    <property type="protein sequence ID" value="AAA48271.1"/>
    <property type="molecule type" value="Genomic_DNA"/>
</dbReference>
<dbReference type="PIR" id="A03893">
    <property type="entry name" value="QQVZ23"/>
</dbReference>
<reference key="1">
    <citation type="journal article" date="1986" name="Virology">
        <title>Nucleotide sequence and genetic map of the 16-kb vaccinia virus HindIII D fragment.</title>
        <authorList>
            <person name="Niles E.G."/>
            <person name="Condit R.C."/>
            <person name="Caro P."/>
            <person name="Davidson K."/>
            <person name="Matusick L."/>
            <person name="Seto J."/>
        </authorList>
    </citation>
    <scope>NUCLEOTIDE SEQUENCE [GENOMIC DNA]</scope>
</reference>
<feature type="chain" id="PRO_0000099701" description="Uncharacterized 7.0 kDa protein">
    <location>
        <begin position="1"/>
        <end position="62"/>
    </location>
</feature>